<name>LPTE_YERPG</name>
<sequence>MRHRILTLLLGLAVLVTAGCGFNLRGTTQVPTELQKLLLESSDPYGPLARSIRQQLRLNNVTIVDDAMRKDIPTLRIIGSSESQETVSIFRNGVAAENQLVLHVQAQVLIPGHDIYPLQVNVFRTFFDNPLTALAKEAEAEVLRQEMREQAAQQLVRQLLTVHAAEVKNTQKNGDKPVSDANAAQGSTPTAVNETTLGEPAVSTSAK</sequence>
<comment type="function">
    <text evidence="1">Together with LptD, is involved in the assembly of lipopolysaccharide (LPS) at the surface of the outer membrane. Required for the proper assembly of LptD. Binds LPS and may serve as the LPS recognition site at the outer membrane.</text>
</comment>
<comment type="subunit">
    <text evidence="1">Component of the lipopolysaccharide transport and assembly complex. Interacts with LptD.</text>
</comment>
<comment type="subcellular location">
    <subcellularLocation>
        <location evidence="1">Cell outer membrane</location>
        <topology evidence="1">Lipid-anchor</topology>
    </subcellularLocation>
</comment>
<comment type="similarity">
    <text evidence="1">Belongs to the LptE lipoprotein family.</text>
</comment>
<accession>A9R6Z1</accession>
<proteinExistence type="inferred from homology"/>
<keyword id="KW-0998">Cell outer membrane</keyword>
<keyword id="KW-0449">Lipoprotein</keyword>
<keyword id="KW-0472">Membrane</keyword>
<keyword id="KW-0564">Palmitate</keyword>
<keyword id="KW-0732">Signal</keyword>
<protein>
    <recommendedName>
        <fullName evidence="1">LPS-assembly lipoprotein LptE</fullName>
    </recommendedName>
</protein>
<dbReference type="EMBL" id="CP000901">
    <property type="protein sequence ID" value="ABX88115.1"/>
    <property type="molecule type" value="Genomic_DNA"/>
</dbReference>
<dbReference type="RefSeq" id="WP_002210332.1">
    <property type="nucleotide sequence ID" value="NZ_CP009935.1"/>
</dbReference>
<dbReference type="SMR" id="A9R6Z1"/>
<dbReference type="GeneID" id="57976086"/>
<dbReference type="KEGG" id="ypg:YpAngola_A1843"/>
<dbReference type="PATRIC" id="fig|349746.12.peg.2819"/>
<dbReference type="GO" id="GO:0009279">
    <property type="term" value="C:cell outer membrane"/>
    <property type="evidence" value="ECO:0007669"/>
    <property type="project" value="UniProtKB-SubCell"/>
</dbReference>
<dbReference type="GO" id="GO:1990351">
    <property type="term" value="C:transporter complex"/>
    <property type="evidence" value="ECO:0007669"/>
    <property type="project" value="TreeGrafter"/>
</dbReference>
<dbReference type="GO" id="GO:0001530">
    <property type="term" value="F:lipopolysaccharide binding"/>
    <property type="evidence" value="ECO:0007669"/>
    <property type="project" value="TreeGrafter"/>
</dbReference>
<dbReference type="GO" id="GO:0043165">
    <property type="term" value="P:Gram-negative-bacterium-type cell outer membrane assembly"/>
    <property type="evidence" value="ECO:0007669"/>
    <property type="project" value="UniProtKB-UniRule"/>
</dbReference>
<dbReference type="GO" id="GO:0015920">
    <property type="term" value="P:lipopolysaccharide transport"/>
    <property type="evidence" value="ECO:0007669"/>
    <property type="project" value="TreeGrafter"/>
</dbReference>
<dbReference type="Gene3D" id="3.30.160.150">
    <property type="entry name" value="Lipoprotein like domain"/>
    <property type="match status" value="1"/>
</dbReference>
<dbReference type="HAMAP" id="MF_01186">
    <property type="entry name" value="LPS_assembly_LptE"/>
    <property type="match status" value="1"/>
</dbReference>
<dbReference type="InterPro" id="IPR007485">
    <property type="entry name" value="LPS_assembly_LptE"/>
</dbReference>
<dbReference type="NCBIfam" id="NF008062">
    <property type="entry name" value="PRK10796.1"/>
    <property type="match status" value="1"/>
</dbReference>
<dbReference type="PANTHER" id="PTHR38098">
    <property type="entry name" value="LPS-ASSEMBLY LIPOPROTEIN LPTE"/>
    <property type="match status" value="1"/>
</dbReference>
<dbReference type="PANTHER" id="PTHR38098:SF1">
    <property type="entry name" value="LPS-ASSEMBLY LIPOPROTEIN LPTE"/>
    <property type="match status" value="1"/>
</dbReference>
<dbReference type="Pfam" id="PF04390">
    <property type="entry name" value="LptE"/>
    <property type="match status" value="1"/>
</dbReference>
<dbReference type="PROSITE" id="PS51257">
    <property type="entry name" value="PROKAR_LIPOPROTEIN"/>
    <property type="match status" value="1"/>
</dbReference>
<feature type="signal peptide" evidence="1">
    <location>
        <begin position="1"/>
        <end position="19"/>
    </location>
</feature>
<feature type="chain" id="PRO_1000138284" description="LPS-assembly lipoprotein LptE">
    <location>
        <begin position="20"/>
        <end position="207"/>
    </location>
</feature>
<feature type="region of interest" description="Disordered" evidence="2">
    <location>
        <begin position="168"/>
        <end position="207"/>
    </location>
</feature>
<feature type="compositionally biased region" description="Polar residues" evidence="2">
    <location>
        <begin position="182"/>
        <end position="207"/>
    </location>
</feature>
<feature type="lipid moiety-binding region" description="N-palmitoyl cysteine" evidence="1">
    <location>
        <position position="20"/>
    </location>
</feature>
<feature type="lipid moiety-binding region" description="S-diacylglycerol cysteine" evidence="1">
    <location>
        <position position="20"/>
    </location>
</feature>
<evidence type="ECO:0000255" key="1">
    <source>
        <dbReference type="HAMAP-Rule" id="MF_01186"/>
    </source>
</evidence>
<evidence type="ECO:0000256" key="2">
    <source>
        <dbReference type="SAM" id="MobiDB-lite"/>
    </source>
</evidence>
<gene>
    <name evidence="1" type="primary">lptE</name>
    <name type="synonym">rlpB</name>
    <name type="ordered locus">YpAngola_A1843</name>
</gene>
<reference key="1">
    <citation type="journal article" date="2010" name="J. Bacteriol.">
        <title>Genome sequence of the deep-rooted Yersinia pestis strain Angola reveals new insights into the evolution and pangenome of the plague bacterium.</title>
        <authorList>
            <person name="Eppinger M."/>
            <person name="Worsham P.L."/>
            <person name="Nikolich M.P."/>
            <person name="Riley D.R."/>
            <person name="Sebastian Y."/>
            <person name="Mou S."/>
            <person name="Achtman M."/>
            <person name="Lindler L.E."/>
            <person name="Ravel J."/>
        </authorList>
    </citation>
    <scope>NUCLEOTIDE SEQUENCE [LARGE SCALE GENOMIC DNA]</scope>
    <source>
        <strain>Angola</strain>
    </source>
</reference>
<organism>
    <name type="scientific">Yersinia pestis bv. Antiqua (strain Angola)</name>
    <dbReference type="NCBI Taxonomy" id="349746"/>
    <lineage>
        <taxon>Bacteria</taxon>
        <taxon>Pseudomonadati</taxon>
        <taxon>Pseudomonadota</taxon>
        <taxon>Gammaproteobacteria</taxon>
        <taxon>Enterobacterales</taxon>
        <taxon>Yersiniaceae</taxon>
        <taxon>Yersinia</taxon>
    </lineage>
</organism>